<proteinExistence type="evidence at protein level"/>
<name>XERS_LACLM</name>
<organism>
    <name type="scientific">Lactococcus lactis subsp. cremoris (strain MG1363)</name>
    <dbReference type="NCBI Taxonomy" id="416870"/>
    <lineage>
        <taxon>Bacteria</taxon>
        <taxon>Bacillati</taxon>
        <taxon>Bacillota</taxon>
        <taxon>Bacilli</taxon>
        <taxon>Lactobacillales</taxon>
        <taxon>Streptococcaceae</taxon>
        <taxon>Lactococcus</taxon>
        <taxon>Lactococcus cremoris subsp. cremoris</taxon>
    </lineage>
</organism>
<keyword id="KW-0131">Cell cycle</keyword>
<keyword id="KW-0132">Cell division</keyword>
<keyword id="KW-0159">Chromosome partition</keyword>
<keyword id="KW-0963">Cytoplasm</keyword>
<keyword id="KW-0229">DNA integration</keyword>
<keyword id="KW-0233">DNA recombination</keyword>
<keyword id="KW-0238">DNA-binding</keyword>
<comment type="function">
    <text evidence="5 6">Site-specific tyrosine recombinase, which acts by catalyzing the cutting and rejoining of the recombining DNA molecules. Essential to convert dimers of the bacterial chromosome into monomers to permit their segregation at cell division (PubMed:17630835, PubMed:20542912). Binds an atypical recombination dif site (difSL). Binds preferentially to the left arm and cooperatively to the right arm of difSL (PubMed:20542912).</text>
</comment>
<comment type="activity regulation">
    <text evidence="2 6">FtsK is required for recombination.</text>
</comment>
<comment type="subcellular location">
    <subcellularLocation>
        <location evidence="2 8">Cytoplasm</location>
    </subcellularLocation>
</comment>
<comment type="miscellaneous">
    <text evidence="9">In contrast to the XerC-XerD complex present in non-streptococcaceae bacteria, XerS acts as a single recombinase required to recombine difSL recombination site.</text>
</comment>
<comment type="similarity">
    <text evidence="2 8">Belongs to the 'phage' integrase family. XerS subfamily.</text>
</comment>
<accession>A2RKP9</accession>
<dbReference type="EMBL" id="AM406671">
    <property type="protein sequence ID" value="CAL97863.1"/>
    <property type="molecule type" value="Genomic_DNA"/>
</dbReference>
<dbReference type="RefSeq" id="WP_011835149.1">
    <property type="nucleotide sequence ID" value="NC_009004.1"/>
</dbReference>
<dbReference type="SMR" id="A2RKP9"/>
<dbReference type="STRING" id="416870.llmg_1270"/>
<dbReference type="GeneID" id="61109491"/>
<dbReference type="KEGG" id="llm:llmg_1270"/>
<dbReference type="eggNOG" id="COG4974">
    <property type="taxonomic scope" value="Bacteria"/>
</dbReference>
<dbReference type="HOGENOM" id="CLU_027562_9_6_9"/>
<dbReference type="OrthoDB" id="283809at2"/>
<dbReference type="PhylomeDB" id="A2RKP9"/>
<dbReference type="Proteomes" id="UP000000364">
    <property type="component" value="Chromosome"/>
</dbReference>
<dbReference type="GO" id="GO:0005737">
    <property type="term" value="C:cytoplasm"/>
    <property type="evidence" value="ECO:0007669"/>
    <property type="project" value="UniProtKB-SubCell"/>
</dbReference>
<dbReference type="GO" id="GO:0003677">
    <property type="term" value="F:DNA binding"/>
    <property type="evidence" value="ECO:0007669"/>
    <property type="project" value="UniProtKB-KW"/>
</dbReference>
<dbReference type="GO" id="GO:0009037">
    <property type="term" value="F:tyrosine-based site-specific recombinase activity"/>
    <property type="evidence" value="ECO:0000315"/>
    <property type="project" value="CACAO"/>
</dbReference>
<dbReference type="GO" id="GO:0051301">
    <property type="term" value="P:cell division"/>
    <property type="evidence" value="ECO:0007669"/>
    <property type="project" value="UniProtKB-KW"/>
</dbReference>
<dbReference type="GO" id="GO:0007059">
    <property type="term" value="P:chromosome segregation"/>
    <property type="evidence" value="ECO:0007669"/>
    <property type="project" value="UniProtKB-UniRule"/>
</dbReference>
<dbReference type="GO" id="GO:0006310">
    <property type="term" value="P:DNA recombination"/>
    <property type="evidence" value="ECO:0007669"/>
    <property type="project" value="UniProtKB-UniRule"/>
</dbReference>
<dbReference type="FunFam" id="1.10.443.10:FF:000010">
    <property type="entry name" value="Tyrosine recombinase XerS"/>
    <property type="match status" value="1"/>
</dbReference>
<dbReference type="Gene3D" id="1.10.150.130">
    <property type="match status" value="1"/>
</dbReference>
<dbReference type="Gene3D" id="1.10.443.10">
    <property type="entry name" value="Intergrase catalytic core"/>
    <property type="match status" value="1"/>
</dbReference>
<dbReference type="HAMAP" id="MF_01816">
    <property type="entry name" value="Recomb_XerS"/>
    <property type="match status" value="1"/>
</dbReference>
<dbReference type="InterPro" id="IPR044068">
    <property type="entry name" value="CB"/>
</dbReference>
<dbReference type="InterPro" id="IPR011010">
    <property type="entry name" value="DNA_brk_join_enz"/>
</dbReference>
<dbReference type="InterPro" id="IPR013762">
    <property type="entry name" value="Integrase-like_cat_sf"/>
</dbReference>
<dbReference type="InterPro" id="IPR002104">
    <property type="entry name" value="Integrase_catalytic"/>
</dbReference>
<dbReference type="InterPro" id="IPR010998">
    <property type="entry name" value="Integrase_recombinase_N"/>
</dbReference>
<dbReference type="InterPro" id="IPR004107">
    <property type="entry name" value="Integrase_SAM-like_N"/>
</dbReference>
<dbReference type="InterPro" id="IPR023670">
    <property type="entry name" value="Recomb_XerS"/>
</dbReference>
<dbReference type="InterPro" id="IPR050090">
    <property type="entry name" value="Tyrosine_recombinase_XerCD"/>
</dbReference>
<dbReference type="NCBIfam" id="NF003462">
    <property type="entry name" value="PRK05084.1"/>
    <property type="match status" value="1"/>
</dbReference>
<dbReference type="PANTHER" id="PTHR30349">
    <property type="entry name" value="PHAGE INTEGRASE-RELATED"/>
    <property type="match status" value="1"/>
</dbReference>
<dbReference type="PANTHER" id="PTHR30349:SF77">
    <property type="entry name" value="TYROSINE RECOMBINASE XERC"/>
    <property type="match status" value="1"/>
</dbReference>
<dbReference type="Pfam" id="PF02899">
    <property type="entry name" value="Phage_int_SAM_1"/>
    <property type="match status" value="1"/>
</dbReference>
<dbReference type="Pfam" id="PF00589">
    <property type="entry name" value="Phage_integrase"/>
    <property type="match status" value="1"/>
</dbReference>
<dbReference type="SUPFAM" id="SSF56349">
    <property type="entry name" value="DNA breaking-rejoining enzymes"/>
    <property type="match status" value="1"/>
</dbReference>
<dbReference type="PROSITE" id="PS51900">
    <property type="entry name" value="CB"/>
    <property type="match status" value="1"/>
</dbReference>
<dbReference type="PROSITE" id="PS51898">
    <property type="entry name" value="TYR_RECOMBINASE"/>
    <property type="match status" value="1"/>
</dbReference>
<feature type="chain" id="PRO_0000372667" description="Tyrosine recombinase XerS">
    <location>
        <begin position="1"/>
        <end position="356"/>
    </location>
</feature>
<feature type="domain" description="Core-binding (CB)" evidence="4">
    <location>
        <begin position="16"/>
        <end position="121"/>
    </location>
</feature>
<feature type="domain" description="Tyr recombinase" evidence="3">
    <location>
        <begin position="169"/>
        <end position="354"/>
    </location>
</feature>
<feature type="active site" evidence="1 2">
    <location>
        <position position="210"/>
    </location>
</feature>
<feature type="active site" evidence="1 2">
    <location>
        <position position="234"/>
    </location>
</feature>
<feature type="active site" evidence="1 2">
    <location>
        <position position="306"/>
    </location>
</feature>
<feature type="active site" evidence="1 2">
    <location>
        <position position="309"/>
    </location>
</feature>
<feature type="active site" evidence="1 2">
    <location>
        <position position="332"/>
    </location>
</feature>
<feature type="active site" description="O-(3'-phospho-DNA)-tyrosine intermediate" evidence="1 2">
    <location>
        <position position="341"/>
    </location>
</feature>
<feature type="mutagenesis site" description="Decrease in DNA binding. Lack of recombinase activity." evidence="6">
    <original>Y</original>
    <variation>F</variation>
    <location>
        <position position="341"/>
    </location>
</feature>
<protein>
    <recommendedName>
        <fullName evidence="2 8">Tyrosine recombinase XerS</fullName>
    </recommendedName>
</protein>
<reference key="1">
    <citation type="journal article" date="2007" name="J. Bacteriol.">
        <title>The complete genome sequence of the lactic acid bacterial paradigm Lactococcus lactis subsp. cremoris MG1363.</title>
        <authorList>
            <person name="Wegmann U."/>
            <person name="O'Connell-Motherway M."/>
            <person name="Zomer A."/>
            <person name="Buist G."/>
            <person name="Shearman C."/>
            <person name="Canchaya C."/>
            <person name="Ventura M."/>
            <person name="Goesmann A."/>
            <person name="Gasson M.J."/>
            <person name="Kuipers O.P."/>
            <person name="van Sinderen D."/>
            <person name="Kok J."/>
        </authorList>
    </citation>
    <scope>NUCLEOTIDE SEQUENCE [LARGE SCALE GENOMIC DNA]</scope>
    <source>
        <strain>MG1363</strain>
    </source>
</reference>
<reference key="2">
    <citation type="journal article" date="2007" name="PLoS Genet.">
        <title>The unconventional Xer recombination machinery of Streptococci/Lactococci.</title>
        <authorList>
            <person name="Le Bourgeois P."/>
            <person name="Bugarel M."/>
            <person name="Campo N."/>
            <person name="Daveran-Mingot M.-L."/>
            <person name="Labonte J."/>
            <person name="Lanfranchi D."/>
            <person name="Lautier T."/>
            <person name="Pages C."/>
            <person name="Ritzenthaler P."/>
        </authorList>
    </citation>
    <scope>FUNCTION AS A RECOMBINASE</scope>
    <source>
        <strain>MG1363</strain>
    </source>
</reference>
<reference key="3">
    <citation type="journal article" date="2010" name="Nucleic Acids Res.">
        <title>Are two better than one? Analysis of an FtsK/Xer recombination system that uses a single recombinase.</title>
        <authorList>
            <person name="Nolivos S."/>
            <person name="Pages C."/>
            <person name="Rousseau P."/>
            <person name="Le Bourgeois P."/>
            <person name="Cornet F."/>
        </authorList>
    </citation>
    <scope>FUNCTION AS A RECOMBINASE</scope>
    <scope>DNA-BINDING</scope>
    <scope>ACTIVITY REGULATION</scope>
    <scope>MUTAGENESIS OF TYR-341</scope>
</reference>
<sequence length="356" mass="41307">MKREQLIQNIEKLKHVMPPYVLEYYQSKLTIPYSLNTLYEYLKEYERFFSWLVDSGVADVDKITDVSLSVLENLTKRDLESFILYLRERPRLNTHSTRYGVSQTTINRTLSALSSLYKYLTEEVENEDGEPYFYRNVMKKVQTKKKSETLASRAENIKGKLFLGDETQGFLDYIDSEYEKTLSNRARSSFFKNKERDLAIIALILASGIRLSEAVNVDLRDLNLNTMIVEVTRKGGKRDAVPFAPFAKTYFERYLEVRSQRYKTTAKDTAFFVTLYRDIASRIDPSSVEKLVAKYSQAFKVRVTPHKLRHTLATRLYAQTNSQVLVSNQLGHASTQVTDLYTHIINEEQKNALDSL</sequence>
<evidence type="ECO:0000250" key="1">
    <source>
        <dbReference type="UniProtKB" id="P0A8P8"/>
    </source>
</evidence>
<evidence type="ECO:0000255" key="2">
    <source>
        <dbReference type="HAMAP-Rule" id="MF_01816"/>
    </source>
</evidence>
<evidence type="ECO:0000255" key="3">
    <source>
        <dbReference type="PROSITE-ProRule" id="PRU01246"/>
    </source>
</evidence>
<evidence type="ECO:0000255" key="4">
    <source>
        <dbReference type="PROSITE-ProRule" id="PRU01248"/>
    </source>
</evidence>
<evidence type="ECO:0000269" key="5">
    <source>
    </source>
</evidence>
<evidence type="ECO:0000269" key="6">
    <source>
    </source>
</evidence>
<evidence type="ECO:0000303" key="7">
    <source>
    </source>
</evidence>
<evidence type="ECO:0000305" key="8"/>
<evidence type="ECO:0000305" key="9">
    <source>
    </source>
</evidence>
<gene>
    <name evidence="2 7" type="primary">xerS</name>
    <name type="ordered locus">llmg_1270</name>
</gene>